<keyword id="KW-0997">Cell inner membrane</keyword>
<keyword id="KW-1003">Cell membrane</keyword>
<keyword id="KW-0472">Membrane</keyword>
<keyword id="KW-0812">Transmembrane</keyword>
<keyword id="KW-1133">Transmembrane helix</keyword>
<sequence length="247" mass="26371">MSITAKSVYRDAGNFFRNQFITILLVSLLCAFITVVLGHAFSPSDAQIAQLSEGEHLAGSAGLFELVQNMTPEQQQILLRASAASTFSGLIGNAILAGGIILMIQLVSAGHRVSALRAIGASAPALPKLFILIFLTTLLVQIGIMLIVVPGIIMAIVLALAPVMLVEEKMGVFAAMRSSMRLAWANMRLVAPAVIGWLLAKTLLLLFAPSFAVLTPNVGAVLANTLSNLISAVLLIYLFRLYMLIRQ</sequence>
<name>YCIC_SALDC</name>
<comment type="subcellular location">
    <subcellularLocation>
        <location evidence="1">Cell inner membrane</location>
        <topology evidence="1">Multi-pass membrane protein</topology>
    </subcellularLocation>
</comment>
<comment type="similarity">
    <text evidence="1">Belongs to the UPF0259 family.</text>
</comment>
<accession>B5FU58</accession>
<feature type="chain" id="PRO_1000136589" description="UPF0259 membrane protein YciC">
    <location>
        <begin position="1"/>
        <end position="247"/>
    </location>
</feature>
<feature type="transmembrane region" description="Helical" evidence="1">
    <location>
        <begin position="20"/>
        <end position="40"/>
    </location>
</feature>
<feature type="transmembrane region" description="Helical" evidence="1">
    <location>
        <begin position="87"/>
        <end position="107"/>
    </location>
</feature>
<feature type="transmembrane region" description="Helical" evidence="1">
    <location>
        <begin position="118"/>
        <end position="140"/>
    </location>
</feature>
<feature type="transmembrane region" description="Helical" evidence="1">
    <location>
        <begin position="152"/>
        <end position="172"/>
    </location>
</feature>
<feature type="transmembrane region" description="Helical" evidence="1">
    <location>
        <begin position="194"/>
        <end position="214"/>
    </location>
</feature>
<feature type="transmembrane region" description="Helical" evidence="1">
    <location>
        <begin position="219"/>
        <end position="239"/>
    </location>
</feature>
<organism>
    <name type="scientific">Salmonella dublin (strain CT_02021853)</name>
    <dbReference type="NCBI Taxonomy" id="439851"/>
    <lineage>
        <taxon>Bacteria</taxon>
        <taxon>Pseudomonadati</taxon>
        <taxon>Pseudomonadota</taxon>
        <taxon>Gammaproteobacteria</taxon>
        <taxon>Enterobacterales</taxon>
        <taxon>Enterobacteriaceae</taxon>
        <taxon>Salmonella</taxon>
    </lineage>
</organism>
<reference key="1">
    <citation type="journal article" date="2011" name="J. Bacteriol.">
        <title>Comparative genomics of 28 Salmonella enterica isolates: evidence for CRISPR-mediated adaptive sublineage evolution.</title>
        <authorList>
            <person name="Fricke W.F."/>
            <person name="Mammel M.K."/>
            <person name="McDermott P.F."/>
            <person name="Tartera C."/>
            <person name="White D.G."/>
            <person name="Leclerc J.E."/>
            <person name="Ravel J."/>
            <person name="Cebula T.A."/>
        </authorList>
    </citation>
    <scope>NUCLEOTIDE SEQUENCE [LARGE SCALE GENOMIC DNA]</scope>
    <source>
        <strain>CT_02021853</strain>
    </source>
</reference>
<gene>
    <name evidence="1" type="primary">yciC</name>
    <name type="ordered locus">SeD_A1594</name>
</gene>
<proteinExistence type="inferred from homology"/>
<dbReference type="EMBL" id="CP001144">
    <property type="protein sequence ID" value="ACH77764.1"/>
    <property type="molecule type" value="Genomic_DNA"/>
</dbReference>
<dbReference type="RefSeq" id="WP_000028507.1">
    <property type="nucleotide sequence ID" value="NC_011205.1"/>
</dbReference>
<dbReference type="KEGG" id="sed:SeD_A1594"/>
<dbReference type="HOGENOM" id="CLU_073287_0_0_6"/>
<dbReference type="Proteomes" id="UP000008322">
    <property type="component" value="Chromosome"/>
</dbReference>
<dbReference type="GO" id="GO:0005886">
    <property type="term" value="C:plasma membrane"/>
    <property type="evidence" value="ECO:0007669"/>
    <property type="project" value="UniProtKB-SubCell"/>
</dbReference>
<dbReference type="HAMAP" id="MF_01067">
    <property type="entry name" value="UPF0259"/>
    <property type="match status" value="1"/>
</dbReference>
<dbReference type="InterPro" id="IPR009627">
    <property type="entry name" value="UPF0259"/>
</dbReference>
<dbReference type="NCBIfam" id="NF002774">
    <property type="entry name" value="PRK02868.1"/>
    <property type="match status" value="1"/>
</dbReference>
<dbReference type="Pfam" id="PF06790">
    <property type="entry name" value="UPF0259"/>
    <property type="match status" value="1"/>
</dbReference>
<evidence type="ECO:0000255" key="1">
    <source>
        <dbReference type="HAMAP-Rule" id="MF_01067"/>
    </source>
</evidence>
<protein>
    <recommendedName>
        <fullName evidence="1">UPF0259 membrane protein YciC</fullName>
    </recommendedName>
</protein>